<protein>
    <recommendedName>
        <fullName evidence="1">Cysteine--tRNA ligase</fullName>
        <ecNumber evidence="1">6.1.1.16</ecNumber>
    </recommendedName>
    <alternativeName>
        <fullName evidence="1">Cysteinyl-tRNA synthetase</fullName>
        <shortName evidence="1">CysRS</shortName>
    </alternativeName>
</protein>
<gene>
    <name evidence="1" type="primary">cysS</name>
    <name type="ordered locus">P9301_13301</name>
</gene>
<reference key="1">
    <citation type="journal article" date="2007" name="PLoS Genet.">
        <title>Patterns and implications of gene gain and loss in the evolution of Prochlorococcus.</title>
        <authorList>
            <person name="Kettler G.C."/>
            <person name="Martiny A.C."/>
            <person name="Huang K."/>
            <person name="Zucker J."/>
            <person name="Coleman M.L."/>
            <person name="Rodrigue S."/>
            <person name="Chen F."/>
            <person name="Lapidus A."/>
            <person name="Ferriera S."/>
            <person name="Johnson J."/>
            <person name="Steglich C."/>
            <person name="Church G.M."/>
            <person name="Richardson P."/>
            <person name="Chisholm S.W."/>
        </authorList>
    </citation>
    <scope>NUCLEOTIDE SEQUENCE [LARGE SCALE GENOMIC DNA]</scope>
    <source>
        <strain>MIT 9301</strain>
    </source>
</reference>
<evidence type="ECO:0000255" key="1">
    <source>
        <dbReference type="HAMAP-Rule" id="MF_00041"/>
    </source>
</evidence>
<comment type="catalytic activity">
    <reaction evidence="1">
        <text>tRNA(Cys) + L-cysteine + ATP = L-cysteinyl-tRNA(Cys) + AMP + diphosphate</text>
        <dbReference type="Rhea" id="RHEA:17773"/>
        <dbReference type="Rhea" id="RHEA-COMP:9661"/>
        <dbReference type="Rhea" id="RHEA-COMP:9679"/>
        <dbReference type="ChEBI" id="CHEBI:30616"/>
        <dbReference type="ChEBI" id="CHEBI:33019"/>
        <dbReference type="ChEBI" id="CHEBI:35235"/>
        <dbReference type="ChEBI" id="CHEBI:78442"/>
        <dbReference type="ChEBI" id="CHEBI:78517"/>
        <dbReference type="ChEBI" id="CHEBI:456215"/>
        <dbReference type="EC" id="6.1.1.16"/>
    </reaction>
</comment>
<comment type="cofactor">
    <cofactor evidence="1">
        <name>Zn(2+)</name>
        <dbReference type="ChEBI" id="CHEBI:29105"/>
    </cofactor>
    <text evidence="1">Binds 1 zinc ion per subunit.</text>
</comment>
<comment type="subunit">
    <text evidence="1">Monomer.</text>
</comment>
<comment type="subcellular location">
    <subcellularLocation>
        <location evidence="1">Cytoplasm</location>
    </subcellularLocation>
</comment>
<comment type="similarity">
    <text evidence="1">Belongs to the class-I aminoacyl-tRNA synthetase family.</text>
</comment>
<dbReference type="EC" id="6.1.1.16" evidence="1"/>
<dbReference type="EMBL" id="CP000576">
    <property type="protein sequence ID" value="ABO17953.1"/>
    <property type="molecule type" value="Genomic_DNA"/>
</dbReference>
<dbReference type="RefSeq" id="WP_011863267.1">
    <property type="nucleotide sequence ID" value="NC_009091.1"/>
</dbReference>
<dbReference type="SMR" id="A3PDX8"/>
<dbReference type="STRING" id="167546.P9301_13301"/>
<dbReference type="KEGG" id="pmg:P9301_13301"/>
<dbReference type="eggNOG" id="COG0215">
    <property type="taxonomic scope" value="Bacteria"/>
</dbReference>
<dbReference type="HOGENOM" id="CLU_013528_0_1_3"/>
<dbReference type="OrthoDB" id="9815130at2"/>
<dbReference type="Proteomes" id="UP000001430">
    <property type="component" value="Chromosome"/>
</dbReference>
<dbReference type="GO" id="GO:0005829">
    <property type="term" value="C:cytosol"/>
    <property type="evidence" value="ECO:0007669"/>
    <property type="project" value="TreeGrafter"/>
</dbReference>
<dbReference type="GO" id="GO:0005524">
    <property type="term" value="F:ATP binding"/>
    <property type="evidence" value="ECO:0007669"/>
    <property type="project" value="UniProtKB-UniRule"/>
</dbReference>
<dbReference type="GO" id="GO:0004817">
    <property type="term" value="F:cysteine-tRNA ligase activity"/>
    <property type="evidence" value="ECO:0007669"/>
    <property type="project" value="UniProtKB-UniRule"/>
</dbReference>
<dbReference type="GO" id="GO:0008270">
    <property type="term" value="F:zinc ion binding"/>
    <property type="evidence" value="ECO:0007669"/>
    <property type="project" value="UniProtKB-UniRule"/>
</dbReference>
<dbReference type="GO" id="GO:0006423">
    <property type="term" value="P:cysteinyl-tRNA aminoacylation"/>
    <property type="evidence" value="ECO:0007669"/>
    <property type="project" value="UniProtKB-UniRule"/>
</dbReference>
<dbReference type="CDD" id="cd00672">
    <property type="entry name" value="CysRS_core"/>
    <property type="match status" value="1"/>
</dbReference>
<dbReference type="FunFam" id="3.40.50.620:FF:000009">
    <property type="entry name" value="Cysteine--tRNA ligase"/>
    <property type="match status" value="1"/>
</dbReference>
<dbReference type="Gene3D" id="1.20.120.1910">
    <property type="entry name" value="Cysteine-tRNA ligase, C-terminal anti-codon recognition domain"/>
    <property type="match status" value="1"/>
</dbReference>
<dbReference type="Gene3D" id="3.40.50.620">
    <property type="entry name" value="HUPs"/>
    <property type="match status" value="1"/>
</dbReference>
<dbReference type="HAMAP" id="MF_00041">
    <property type="entry name" value="Cys_tRNA_synth"/>
    <property type="match status" value="1"/>
</dbReference>
<dbReference type="InterPro" id="IPR015803">
    <property type="entry name" value="Cys-tRNA-ligase"/>
</dbReference>
<dbReference type="InterPro" id="IPR015273">
    <property type="entry name" value="Cys-tRNA-synt_Ia_DALR"/>
</dbReference>
<dbReference type="InterPro" id="IPR024909">
    <property type="entry name" value="Cys-tRNA/MSH_ligase"/>
</dbReference>
<dbReference type="InterPro" id="IPR014729">
    <property type="entry name" value="Rossmann-like_a/b/a_fold"/>
</dbReference>
<dbReference type="InterPro" id="IPR032678">
    <property type="entry name" value="tRNA-synt_1_cat_dom"/>
</dbReference>
<dbReference type="InterPro" id="IPR009080">
    <property type="entry name" value="tRNAsynth_Ia_anticodon-bd"/>
</dbReference>
<dbReference type="NCBIfam" id="TIGR00435">
    <property type="entry name" value="cysS"/>
    <property type="match status" value="1"/>
</dbReference>
<dbReference type="PANTHER" id="PTHR10890:SF3">
    <property type="entry name" value="CYSTEINE--TRNA LIGASE, CYTOPLASMIC"/>
    <property type="match status" value="1"/>
</dbReference>
<dbReference type="PANTHER" id="PTHR10890">
    <property type="entry name" value="CYSTEINYL-TRNA SYNTHETASE"/>
    <property type="match status" value="1"/>
</dbReference>
<dbReference type="Pfam" id="PF09190">
    <property type="entry name" value="DALR_2"/>
    <property type="match status" value="1"/>
</dbReference>
<dbReference type="Pfam" id="PF01406">
    <property type="entry name" value="tRNA-synt_1e"/>
    <property type="match status" value="1"/>
</dbReference>
<dbReference type="PRINTS" id="PR00983">
    <property type="entry name" value="TRNASYNTHCYS"/>
</dbReference>
<dbReference type="SMART" id="SM00840">
    <property type="entry name" value="DALR_2"/>
    <property type="match status" value="1"/>
</dbReference>
<dbReference type="SUPFAM" id="SSF47323">
    <property type="entry name" value="Anticodon-binding domain of a subclass of class I aminoacyl-tRNA synthetases"/>
    <property type="match status" value="1"/>
</dbReference>
<dbReference type="SUPFAM" id="SSF52374">
    <property type="entry name" value="Nucleotidylyl transferase"/>
    <property type="match status" value="1"/>
</dbReference>
<proteinExistence type="inferred from homology"/>
<accession>A3PDX8</accession>
<keyword id="KW-0030">Aminoacyl-tRNA synthetase</keyword>
<keyword id="KW-0067">ATP-binding</keyword>
<keyword id="KW-0963">Cytoplasm</keyword>
<keyword id="KW-0436">Ligase</keyword>
<keyword id="KW-0479">Metal-binding</keyword>
<keyword id="KW-0547">Nucleotide-binding</keyword>
<keyword id="KW-0648">Protein biosynthesis</keyword>
<keyword id="KW-1185">Reference proteome</keyword>
<keyword id="KW-0862">Zinc</keyword>
<organism>
    <name type="scientific">Prochlorococcus marinus (strain MIT 9301)</name>
    <dbReference type="NCBI Taxonomy" id="167546"/>
    <lineage>
        <taxon>Bacteria</taxon>
        <taxon>Bacillati</taxon>
        <taxon>Cyanobacteriota</taxon>
        <taxon>Cyanophyceae</taxon>
        <taxon>Synechococcales</taxon>
        <taxon>Prochlorococcaceae</taxon>
        <taxon>Prochlorococcus</taxon>
    </lineage>
</organism>
<sequence>MIKLFNTLSKRIEVFKPIDDVVKIYCCGVTVYDLCHLGHARSYIAWDVLRRFLIYSDFKVKYVQNFTDIDDKILKRAKEESISMKEVSEKNIIEFHKDMDSLGIMRPDSMPRATNHICNICDLITILEDKGYAYSRDGDVYYSVFKNQNYGKLSNQNIEEQNINQQGRMANEENSKKLNPQDFALWKKAKDDEPFFDSPWGKGRPGWHIECSAMVKDELGDTIDIHLGGSDLIFPHHENEIAQSEAANGKKLANYWLHNGMVNVNGQKMSKSLKNFKTIRELINSGISPMTLRYFVMTVNYRKPLDFTEEALRSASEAWKNINVALSFMDLTKGSLNSIDKNEPIEEEYKEKISFELSQKKLKFSEALGNDLNTASAIAIIYDLAKPLKNFLNQFQRVEGFKIDQNEKFFLLENFKTLEKLTEVLGLKKEVLVKESKITEEEISTLINERLKAKKEKNYAKADEIRSLLKEKGIELIDQSKEITTWIRV</sequence>
<feature type="chain" id="PRO_0000332873" description="Cysteine--tRNA ligase">
    <location>
        <begin position="1"/>
        <end position="489"/>
    </location>
</feature>
<feature type="short sequence motif" description="'HIGH' region">
    <location>
        <begin position="29"/>
        <end position="39"/>
    </location>
</feature>
<feature type="short sequence motif" description="'KMSKS' region">
    <location>
        <begin position="268"/>
        <end position="272"/>
    </location>
</feature>
<feature type="binding site" evidence="1">
    <location>
        <position position="27"/>
    </location>
    <ligand>
        <name>Zn(2+)</name>
        <dbReference type="ChEBI" id="CHEBI:29105"/>
    </ligand>
</feature>
<feature type="binding site" evidence="1">
    <location>
        <position position="211"/>
    </location>
    <ligand>
        <name>Zn(2+)</name>
        <dbReference type="ChEBI" id="CHEBI:29105"/>
    </ligand>
</feature>
<feature type="binding site" evidence="1">
    <location>
        <position position="236"/>
    </location>
    <ligand>
        <name>Zn(2+)</name>
        <dbReference type="ChEBI" id="CHEBI:29105"/>
    </ligand>
</feature>
<feature type="binding site" evidence="1">
    <location>
        <position position="240"/>
    </location>
    <ligand>
        <name>Zn(2+)</name>
        <dbReference type="ChEBI" id="CHEBI:29105"/>
    </ligand>
</feature>
<feature type="binding site" evidence="1">
    <location>
        <position position="271"/>
    </location>
    <ligand>
        <name>ATP</name>
        <dbReference type="ChEBI" id="CHEBI:30616"/>
    </ligand>
</feature>
<name>SYC_PROM0</name>